<organism>
    <name type="scientific">Arabidopsis thaliana</name>
    <name type="common">Mouse-ear cress</name>
    <dbReference type="NCBI Taxonomy" id="3702"/>
    <lineage>
        <taxon>Eukaryota</taxon>
        <taxon>Viridiplantae</taxon>
        <taxon>Streptophyta</taxon>
        <taxon>Embryophyta</taxon>
        <taxon>Tracheophyta</taxon>
        <taxon>Spermatophyta</taxon>
        <taxon>Magnoliopsida</taxon>
        <taxon>eudicotyledons</taxon>
        <taxon>Gunneridae</taxon>
        <taxon>Pentapetalae</taxon>
        <taxon>rosids</taxon>
        <taxon>malvids</taxon>
        <taxon>Brassicales</taxon>
        <taxon>Brassicaceae</taxon>
        <taxon>Camelineae</taxon>
        <taxon>Arabidopsis</taxon>
    </lineage>
</organism>
<accession>Q8VZW3</accession>
<accession>Q9FLC7</accession>
<gene>
    <name type="primary">CHI3</name>
    <name type="synonym">CHI-L1</name>
    <name type="synonym">CHIL</name>
    <name type="ordered locus">At5g05270</name>
    <name type="ORF">K18I23.7</name>
</gene>
<dbReference type="EC" id="5.5.1.6"/>
<dbReference type="EMBL" id="AB010692">
    <property type="protein sequence ID" value="BAB09970.1"/>
    <property type="status" value="ALT_INIT"/>
    <property type="molecule type" value="Genomic_DNA"/>
</dbReference>
<dbReference type="EMBL" id="CP002688">
    <property type="protein sequence ID" value="AED90848.1"/>
    <property type="molecule type" value="Genomic_DNA"/>
</dbReference>
<dbReference type="EMBL" id="CP002688">
    <property type="protein sequence ID" value="AED90849.1"/>
    <property type="molecule type" value="Genomic_DNA"/>
</dbReference>
<dbReference type="EMBL" id="AY063786">
    <property type="protein sequence ID" value="AAL36093.1"/>
    <property type="molecule type" value="mRNA"/>
</dbReference>
<dbReference type="EMBL" id="AY096448">
    <property type="protein sequence ID" value="AAM20088.1"/>
    <property type="molecule type" value="mRNA"/>
</dbReference>
<dbReference type="EMBL" id="AY088019">
    <property type="protein sequence ID" value="AAM65565.1"/>
    <property type="molecule type" value="mRNA"/>
</dbReference>
<dbReference type="RefSeq" id="NP_568154.1">
    <property type="nucleotide sequence ID" value="NM_120609.3"/>
</dbReference>
<dbReference type="RefSeq" id="NP_850770.1">
    <property type="nucleotide sequence ID" value="NM_180439.2"/>
</dbReference>
<dbReference type="PDB" id="4DOK">
    <property type="method" value="X-ray"/>
    <property type="resolution" value="1.70 A"/>
    <property type="chains" value="A/B=5-209"/>
</dbReference>
<dbReference type="PDBsum" id="4DOK"/>
<dbReference type="SMR" id="Q8VZW3"/>
<dbReference type="BioGRID" id="15688">
    <property type="interactions" value="4"/>
</dbReference>
<dbReference type="FunCoup" id="Q8VZW3">
    <property type="interactions" value="398"/>
</dbReference>
<dbReference type="STRING" id="3702.Q8VZW3"/>
<dbReference type="iPTMnet" id="Q8VZW3"/>
<dbReference type="PaxDb" id="3702-AT5G05270.1"/>
<dbReference type="ProMEX" id="Q8VZW3"/>
<dbReference type="ProteomicsDB" id="241229"/>
<dbReference type="EnsemblPlants" id="AT5G05270.1">
    <property type="protein sequence ID" value="AT5G05270.1"/>
    <property type="gene ID" value="AT5G05270"/>
</dbReference>
<dbReference type="EnsemblPlants" id="AT5G05270.2">
    <property type="protein sequence ID" value="AT5G05270.2"/>
    <property type="gene ID" value="AT5G05270"/>
</dbReference>
<dbReference type="GeneID" id="830409"/>
<dbReference type="Gramene" id="AT5G05270.1">
    <property type="protein sequence ID" value="AT5G05270.1"/>
    <property type="gene ID" value="AT5G05270"/>
</dbReference>
<dbReference type="Gramene" id="AT5G05270.2">
    <property type="protein sequence ID" value="AT5G05270.2"/>
    <property type="gene ID" value="AT5G05270"/>
</dbReference>
<dbReference type="KEGG" id="ath:AT5G05270"/>
<dbReference type="Araport" id="AT5G05270"/>
<dbReference type="TAIR" id="AT5G05270">
    <property type="gene designation" value="CHIL"/>
</dbReference>
<dbReference type="eggNOG" id="ENOG502QV3J">
    <property type="taxonomic scope" value="Eukaryota"/>
</dbReference>
<dbReference type="HOGENOM" id="CLU_058915_1_0_1"/>
<dbReference type="InParanoid" id="Q8VZW3"/>
<dbReference type="OMA" id="IITFHFP"/>
<dbReference type="PhylomeDB" id="Q8VZW3"/>
<dbReference type="BioCyc" id="ARA:AT5G05270-MONOMER"/>
<dbReference type="UniPathway" id="UPA00154"/>
<dbReference type="EvolutionaryTrace" id="Q8VZW3"/>
<dbReference type="PRO" id="PR:Q8VZW3"/>
<dbReference type="Proteomes" id="UP000006548">
    <property type="component" value="Chromosome 5"/>
</dbReference>
<dbReference type="ExpressionAtlas" id="Q8VZW3">
    <property type="expression patterns" value="baseline and differential"/>
</dbReference>
<dbReference type="GO" id="GO:0045430">
    <property type="term" value="F:chalcone isomerase activity"/>
    <property type="evidence" value="ECO:0007669"/>
    <property type="project" value="UniProtKB-EC"/>
</dbReference>
<dbReference type="GO" id="GO:0009813">
    <property type="term" value="P:flavonoid biosynthetic process"/>
    <property type="evidence" value="ECO:0007669"/>
    <property type="project" value="UniProtKB-UniPathway"/>
</dbReference>
<dbReference type="Gene3D" id="1.10.890.20">
    <property type="match status" value="1"/>
</dbReference>
<dbReference type="Gene3D" id="3.50.70.10">
    <property type="match status" value="1"/>
</dbReference>
<dbReference type="InterPro" id="IPR016087">
    <property type="entry name" value="Chalcone_isomerase"/>
</dbReference>
<dbReference type="InterPro" id="IPR016088">
    <property type="entry name" value="Chalcone_isomerase_3-sand"/>
</dbReference>
<dbReference type="InterPro" id="IPR016089">
    <property type="entry name" value="Chalcone_isomerase_bundle_sf"/>
</dbReference>
<dbReference type="InterPro" id="IPR036298">
    <property type="entry name" value="Chalcone_isomerase_sf"/>
</dbReference>
<dbReference type="InterPro" id="IPR044191">
    <property type="entry name" value="CHI3-like"/>
</dbReference>
<dbReference type="PANTHER" id="PTHR47588:SF1">
    <property type="entry name" value="CHALCONE--FLAVANONE ISOMERASE 3-RELATED"/>
    <property type="match status" value="1"/>
</dbReference>
<dbReference type="PANTHER" id="PTHR47588">
    <property type="entry name" value="CHALCONE--FLAVONONE ISOMERASE 3-RELATED"/>
    <property type="match status" value="1"/>
</dbReference>
<dbReference type="Pfam" id="PF02431">
    <property type="entry name" value="Chalcone"/>
    <property type="match status" value="1"/>
</dbReference>
<dbReference type="SUPFAM" id="SSF54626">
    <property type="entry name" value="Chalcone isomerase"/>
    <property type="match status" value="1"/>
</dbReference>
<evidence type="ECO:0000269" key="1">
    <source>
    </source>
</evidence>
<evidence type="ECO:0000305" key="2"/>
<evidence type="ECO:0000305" key="3">
    <source>
    </source>
</evidence>
<evidence type="ECO:0007829" key="4">
    <source>
        <dbReference type="PDB" id="4DOK"/>
    </source>
</evidence>
<protein>
    <recommendedName>
        <fullName>Probable chalcone--flavanone isomerase 3</fullName>
        <shortName>Chalcone isomerase 3</shortName>
        <ecNumber>5.5.1.6</ecNumber>
    </recommendedName>
    <alternativeName>
        <fullName>Chalcone isomerase-like 1</fullName>
    </alternativeName>
</protein>
<comment type="function">
    <text evidence="3">Involved in anthocyanin biosynthesis.</text>
</comment>
<comment type="catalytic activity">
    <reaction>
        <text>a chalcone = a flavanone.</text>
        <dbReference type="EC" id="5.5.1.6"/>
    </reaction>
</comment>
<comment type="pathway">
    <text>Secondary metabolite biosynthesis; flavonoid biosynthesis.</text>
</comment>
<comment type="induction">
    <text evidence="1">Induced by PAP1.</text>
</comment>
<comment type="similarity">
    <text evidence="2">Belongs to the chalcone isomerase family.</text>
</comment>
<comment type="sequence caution" evidence="2">
    <conflict type="erroneous initiation">
        <sequence resource="EMBL-CDS" id="BAB09970"/>
    </conflict>
    <text>Truncated N-terminus.</text>
</comment>
<name>CFI3_ARATH</name>
<keyword id="KW-0002">3D-structure</keyword>
<keyword id="KW-0284">Flavonoid biosynthesis</keyword>
<keyword id="KW-0413">Isomerase</keyword>
<keyword id="KW-1185">Reference proteome</keyword>
<reference key="1">
    <citation type="journal article" date="1998" name="DNA Res.">
        <title>Structural analysis of Arabidopsis thaliana chromosome 5. V. Sequence features of the regions of 1,381,565 bp covered by twenty one physically assigned P1 and TAC clones.</title>
        <authorList>
            <person name="Kaneko T."/>
            <person name="Kotani H."/>
            <person name="Nakamura Y."/>
            <person name="Sato S."/>
            <person name="Asamizu E."/>
            <person name="Miyajima N."/>
            <person name="Tabata S."/>
        </authorList>
    </citation>
    <scope>NUCLEOTIDE SEQUENCE [LARGE SCALE GENOMIC DNA]</scope>
    <source>
        <strain>cv. Columbia</strain>
    </source>
</reference>
<reference key="2">
    <citation type="journal article" date="2017" name="Plant J.">
        <title>Araport11: a complete reannotation of the Arabidopsis thaliana reference genome.</title>
        <authorList>
            <person name="Cheng C.Y."/>
            <person name="Krishnakumar V."/>
            <person name="Chan A.P."/>
            <person name="Thibaud-Nissen F."/>
            <person name="Schobel S."/>
            <person name="Town C.D."/>
        </authorList>
    </citation>
    <scope>GENOME REANNOTATION</scope>
    <source>
        <strain>cv. Columbia</strain>
    </source>
</reference>
<reference key="3">
    <citation type="journal article" date="2003" name="Science">
        <title>Empirical analysis of transcriptional activity in the Arabidopsis genome.</title>
        <authorList>
            <person name="Yamada K."/>
            <person name="Lim J."/>
            <person name="Dale J.M."/>
            <person name="Chen H."/>
            <person name="Shinn P."/>
            <person name="Palm C.J."/>
            <person name="Southwick A.M."/>
            <person name="Wu H.C."/>
            <person name="Kim C.J."/>
            <person name="Nguyen M."/>
            <person name="Pham P.K."/>
            <person name="Cheuk R.F."/>
            <person name="Karlin-Newmann G."/>
            <person name="Liu S.X."/>
            <person name="Lam B."/>
            <person name="Sakano H."/>
            <person name="Wu T."/>
            <person name="Yu G."/>
            <person name="Miranda M."/>
            <person name="Quach H.L."/>
            <person name="Tripp M."/>
            <person name="Chang C.H."/>
            <person name="Lee J.M."/>
            <person name="Toriumi M.J."/>
            <person name="Chan M.M."/>
            <person name="Tang C.C."/>
            <person name="Onodera C.S."/>
            <person name="Deng J.M."/>
            <person name="Akiyama K."/>
            <person name="Ansari Y."/>
            <person name="Arakawa T."/>
            <person name="Banh J."/>
            <person name="Banno F."/>
            <person name="Bowser L."/>
            <person name="Brooks S.Y."/>
            <person name="Carninci P."/>
            <person name="Chao Q."/>
            <person name="Choy N."/>
            <person name="Enju A."/>
            <person name="Goldsmith A.D."/>
            <person name="Gurjal M."/>
            <person name="Hansen N.F."/>
            <person name="Hayashizaki Y."/>
            <person name="Johnson-Hopson C."/>
            <person name="Hsuan V.W."/>
            <person name="Iida K."/>
            <person name="Karnes M."/>
            <person name="Khan S."/>
            <person name="Koesema E."/>
            <person name="Ishida J."/>
            <person name="Jiang P.X."/>
            <person name="Jones T."/>
            <person name="Kawai J."/>
            <person name="Kamiya A."/>
            <person name="Meyers C."/>
            <person name="Nakajima M."/>
            <person name="Narusaka M."/>
            <person name="Seki M."/>
            <person name="Sakurai T."/>
            <person name="Satou M."/>
            <person name="Tamse R."/>
            <person name="Vaysberg M."/>
            <person name="Wallender E.K."/>
            <person name="Wong C."/>
            <person name="Yamamura Y."/>
            <person name="Yuan S."/>
            <person name="Shinozaki K."/>
            <person name="Davis R.W."/>
            <person name="Theologis A."/>
            <person name="Ecker J.R."/>
        </authorList>
    </citation>
    <scope>NUCLEOTIDE SEQUENCE [LARGE SCALE MRNA]</scope>
    <source>
        <strain>cv. Columbia</strain>
    </source>
</reference>
<reference key="4">
    <citation type="submission" date="2002-03" db="EMBL/GenBank/DDBJ databases">
        <title>Full-length cDNA from Arabidopsis thaliana.</title>
        <authorList>
            <person name="Brover V.V."/>
            <person name="Troukhan M.E."/>
            <person name="Alexandrov N.A."/>
            <person name="Lu Y.-P."/>
            <person name="Flavell R.B."/>
            <person name="Feldmann K.A."/>
        </authorList>
    </citation>
    <scope>NUCLEOTIDE SEQUENCE [LARGE SCALE MRNA]</scope>
</reference>
<reference key="5">
    <citation type="journal article" date="2005" name="Plant J.">
        <title>Functional genomics by integrated analysis of metabolome and transcriptome of Arabidopsis plants over-expressing an MYB transcription factor.</title>
        <authorList>
            <person name="Tohge T."/>
            <person name="Nishiyama Y."/>
            <person name="Hirai M.Y."/>
            <person name="Yano M."/>
            <person name="Nakajima J."/>
            <person name="Awazuhara M."/>
            <person name="Inoue E."/>
            <person name="Takahashi H."/>
            <person name="Goodenowe D.B."/>
            <person name="Kitayama M."/>
            <person name="Noji M."/>
            <person name="Yamazaki M."/>
            <person name="Saito K."/>
        </authorList>
    </citation>
    <scope>FUNCTION</scope>
    <scope>INDUCTION BY PAP1</scope>
</reference>
<reference key="6">
    <citation type="journal article" date="2013" name="Plant Physiol. Biochem.">
        <title>The flavonoid biosynthetic pathway in Arabidopsis: Structural and genetic diversity.</title>
        <authorList>
            <person name="Saito K."/>
            <person name="Yonekura-Sakakibara K."/>
            <person name="Nakabayashi R."/>
            <person name="Higashi Y."/>
            <person name="Yamazaki M."/>
            <person name="Tohge T."/>
            <person name="Fernie A.R."/>
        </authorList>
    </citation>
    <scope>REVIEW</scope>
    <scope>NOMENCLATURE</scope>
</reference>
<reference key="7">
    <citation type="journal article" date="2012" name="Nature">
        <title>Evolution of the chalcone-isomerase fold from fatty-acid binding to stereospecific catalysis.</title>
        <authorList>
            <person name="Ngaki M.N."/>
            <person name="Louie G.V."/>
            <person name="Philippe R.N."/>
            <person name="Manning G."/>
            <person name="Pojer F."/>
            <person name="Bowman M.E."/>
            <person name="Li L."/>
            <person name="Larsen E."/>
            <person name="Wurtele E.S."/>
            <person name="Noel J.P."/>
        </authorList>
    </citation>
    <scope>X-RAY CRYSTALLOGRAPHY (1.70 ANGSTROMS) OF 5-209</scope>
</reference>
<sequence>MGTEMVMVHEVPFPPQIITSKPLSLLGQGITDIEIHFLQVKFTAIGVYLDPSDVKTHLDNWKGKTGKELAGDDDFFDALASAEMEKVIRVVVIKEIKGAQYGVQLENTVRDRLAEEDKYEEEEETELEKVVGFFQSKYFKANSVITYHFSAKDGICEIGFETEGKEEEKLKVENANVVGMMQRWYLSGSRGVSPSTIVSIADSISAVLT</sequence>
<feature type="chain" id="PRO_0000422076" description="Probable chalcone--flavanone isomerase 3">
    <location>
        <begin position="1"/>
        <end position="209"/>
    </location>
</feature>
<feature type="strand" evidence="4">
    <location>
        <begin position="6"/>
        <end position="8"/>
    </location>
</feature>
<feature type="strand" evidence="4">
    <location>
        <begin position="11"/>
        <end position="13"/>
    </location>
</feature>
<feature type="strand" evidence="4">
    <location>
        <begin position="15"/>
        <end position="35"/>
    </location>
</feature>
<feature type="strand" evidence="4">
    <location>
        <begin position="38"/>
        <end position="49"/>
    </location>
</feature>
<feature type="helix" evidence="4">
    <location>
        <begin position="51"/>
        <end position="57"/>
    </location>
</feature>
<feature type="helix" evidence="4">
    <location>
        <begin position="59"/>
        <end position="61"/>
    </location>
</feature>
<feature type="helix" evidence="4">
    <location>
        <begin position="66"/>
        <end position="70"/>
    </location>
</feature>
<feature type="helix" evidence="4">
    <location>
        <begin position="73"/>
        <end position="81"/>
    </location>
</feature>
<feature type="strand" evidence="4">
    <location>
        <begin position="82"/>
        <end position="84"/>
    </location>
</feature>
<feature type="strand" evidence="4">
    <location>
        <begin position="86"/>
        <end position="94"/>
    </location>
</feature>
<feature type="helix" evidence="4">
    <location>
        <begin position="98"/>
        <end position="115"/>
    </location>
</feature>
<feature type="helix" evidence="4">
    <location>
        <begin position="121"/>
        <end position="135"/>
    </location>
</feature>
<feature type="strand" evidence="4">
    <location>
        <begin position="144"/>
        <end position="149"/>
    </location>
</feature>
<feature type="strand" evidence="4">
    <location>
        <begin position="151"/>
        <end position="153"/>
    </location>
</feature>
<feature type="strand" evidence="4">
    <location>
        <begin position="156"/>
        <end position="161"/>
    </location>
</feature>
<feature type="strand" evidence="4">
    <location>
        <begin position="168"/>
        <end position="172"/>
    </location>
</feature>
<feature type="helix" evidence="4">
    <location>
        <begin position="175"/>
        <end position="185"/>
    </location>
</feature>
<feature type="turn" evidence="4">
    <location>
        <begin position="188"/>
        <end position="190"/>
    </location>
</feature>
<feature type="helix" evidence="4">
    <location>
        <begin position="194"/>
        <end position="208"/>
    </location>
</feature>
<proteinExistence type="evidence at protein level"/>